<organism>
    <name type="scientific">Avian infectious bursal disease virus (strain Cu-1)</name>
    <name type="common">IBDV</name>
    <name type="synonym">Gumboro disease virus</name>
    <dbReference type="NCBI Taxonomy" id="10998"/>
    <lineage>
        <taxon>Viruses</taxon>
        <taxon>Riboviria</taxon>
        <taxon>Orthornavirae</taxon>
        <taxon>Birnaviridae</taxon>
        <taxon>Avibirnavirus</taxon>
        <taxon>Avibirnavirus gumboroense</taxon>
    </lineage>
</organism>
<accession>P15480</accession>
<reference key="1">
    <citation type="journal article" date="1989" name="Nucleic Acids Res.">
        <title>Nucleotide sequence of infectious bursal disease virus genome segment A delineates two major open reading frames.</title>
        <authorList>
            <person name="Spies U."/>
            <person name="Mueller H."/>
            <person name="Becht H."/>
        </authorList>
    </citation>
    <scope>NUCLEOTIDE SEQUENCE [GENOMIC RNA]</scope>
</reference>
<reference key="2">
    <citation type="journal article" date="1990" name="J. Gen. Virol.">
        <title>A comparison of the sequences of segment A of four infectious bursal disease virus strains and identification of a variable region in VP2.</title>
        <authorList>
            <person name="Bayliss C.D."/>
            <person name="Spies U."/>
            <person name="Shaw K."/>
            <person name="Peters R.W."/>
            <person name="Papageorgiou A."/>
            <person name="Mueller H."/>
            <person name="Boursnell M.E.G."/>
        </authorList>
    </citation>
    <scope>NUCLEOTIDE SEQUENCE [GENOMIC RNA]</scope>
</reference>
<reference key="3">
    <citation type="journal article" date="2000" name="J. Gen. Virol.">
        <title>Role of Ser-652 and Lys-692 in the protease activity of infectious bursal disease virus VP4 and identification of its substrate cleavage sites.</title>
        <authorList>
            <person name="Lejal N."/>
            <person name="Da Costa B."/>
            <person name="Huet J.-C."/>
            <person name="Delmas B."/>
        </authorList>
    </citation>
    <scope>PROTEIN SEQUENCE OF 513-519 AND 756-762</scope>
    <scope>ACTIVE SITES OF PROTEASE VP4</scope>
    <scope>PROTEOLYTIC PROCESSING OF POLYPROTEIN</scope>
    <scope>MUTAGENESIS OF 487-ALA-ALA-488; 495-ALA-ALA-494; 501-ALA-ALA-502; 512-ALA-ALA-513; SER-652; LYS-692 AND 755-ALA-ALA-756</scope>
    <source>
        <strain>Isolate vaccine CT</strain>
    </source>
</reference>
<reference key="4">
    <citation type="journal article" date="2002" name="J. Virol.">
        <title>The capsid of infectious bursal disease virus contains several small peptides arising from the maturation process of pVP2.</title>
        <authorList>
            <person name="Da Costa B."/>
            <person name="Chevalier C."/>
            <person name="Henry C."/>
            <person name="Huet J.-C."/>
            <person name="Petit S."/>
            <person name="Lepault J."/>
            <person name="Boot H."/>
            <person name="Delmas B."/>
        </authorList>
    </citation>
    <scope>PROTEIN SEQUENCE OF 442-456 AND 488-512</scope>
    <scope>PROTEOLYTIC PROCESSING OF POLYPROTEIN</scope>
    <scope>MUTAGENESIS OF ALA-441; PHE-442; 487-ALA-ALA-488; 494-ALA-ALA-495; 501-ALA-ALA-502; ALA-512 AND ALA-513</scope>
    <source>
        <strain>Isolate vaccine CT</strain>
    </source>
</reference>
<reference key="5">
    <citation type="journal article" date="2005" name="J. Gen. Virol.">
        <title>Structure of birnavirus-like particles determined by combined electron cryomicroscopy and X-ray crystallography.</title>
        <authorList>
            <person name="Pous J."/>
            <person name="Chevalier C."/>
            <person name="Ouldali M."/>
            <person name="Navaza J."/>
            <person name="Delmas B."/>
            <person name="Lepault J."/>
        </authorList>
    </citation>
    <scope>3D-STRUCTURE MODELING</scope>
    <scope>STRUCTURE BY ELECTRON MICROSCOPY (15 ANGSTROMS) OF VIRAL PARTICLES</scope>
    <source>
        <strain>Isolate vaccine CT</strain>
    </source>
</reference>
<reference key="6">
    <citation type="journal article" date="2005" name="Cell">
        <title>The birnavirus crystal structure reveals structural relationships among icosahedral viruses.</title>
        <authorList>
            <person name="Coulibaly F."/>
            <person name="Chevalier C."/>
            <person name="Gutsche I."/>
            <person name="Pous J."/>
            <person name="Navaza J."/>
            <person name="Bressanelli S."/>
            <person name="Delmas B."/>
            <person name="Rey F.A."/>
        </authorList>
    </citation>
    <scope>X-RAY CRYSTALLOGRAPHY (3.0 ANGSTROMS) OF 1-441</scope>
</reference>
<evidence type="ECO:0000250" key="1"/>
<evidence type="ECO:0000255" key="2">
    <source>
        <dbReference type="PROSITE-ProRule" id="PRU00881"/>
    </source>
</evidence>
<evidence type="ECO:0000256" key="3">
    <source>
        <dbReference type="SAM" id="MobiDB-lite"/>
    </source>
</evidence>
<evidence type="ECO:0000269" key="4">
    <source>
    </source>
</evidence>
<evidence type="ECO:0000269" key="5">
    <source>
    </source>
</evidence>
<evidence type="ECO:0000305" key="6"/>
<evidence type="ECO:0007829" key="7">
    <source>
        <dbReference type="PDB" id="1WCD"/>
    </source>
</evidence>
<comment type="function">
    <text evidence="1">Capsid protein VP2 self assembles to form an icosahedral capsid with a T=13 symmetry, about 70 nm in diameter, and consisting of 260 VP2 trimers. The capsid encapsulates the genomic dsRNA. VP2 is also involved in attachment and entry into the host cell by interacting with host ITGA4/ITGB1 (By similarity).</text>
</comment>
<comment type="function">
    <text evidence="1">The precursor of VP2 plays an important role in capsid assembly. First, pre-VP2 and VP2 oligomers assemble to form a procapsid. Then, the pre-VP2 intermediates may be processed into VP2 proteins by proteolytic cleavage mediated by VP4 to obtain the mature virion. The final capsid is composed of pentamers and hexamers but VP2 has a natural tendency to assemble into all-pentameric structures. Therefore pre-VP2 may be required to allow formation of the hexameric structures (By similarity).</text>
</comment>
<comment type="function">
    <text evidence="2">Protease VP4 is a serine protease that cleaves the polyprotein into its final products. Pre-VP2 is first partially cleaved, and may be completely processed by VP4 upon capsid maturation.</text>
</comment>
<comment type="function">
    <text evidence="1">Capsid protein VP3 plays a key role in virion assembly by providing a scaffold for the capsid made of VP2. May self-assemble to form a T=4-like icosahedral inner-capsid composed of at least 180 trimers. Plays a role in genomic RNA packaging by recruiting VP1 into the capsid and interacting with the dsRNA genome segments to form a ribonucleoprotein complex. Additionally, the interaction of the VP3 C-terminal tail with VP1 removes the inherent structural blockade of the polymerase active site. Thus, VP3 can also function as a transcriptional activator (By similarity).</text>
</comment>
<comment type="function">
    <text evidence="1">Structural peptide 1 is a small peptide derived from pre-VP2 C-terminus. It destabilizes and perforates cell membranes, suggesting a role during entry (By similarity).</text>
</comment>
<comment type="function">
    <text>Structural peptide 2 is a small peptide derived from pVP2 C-terminus. It is not essential for the virus viability, but viral growth is affected when missing.</text>
</comment>
<comment type="function">
    <text>Structural peptide 3 is a small peptide derived from pVP2 C-terminus. It is not essential for the virus viability, but viral growth is affected when missing.</text>
</comment>
<comment type="function">
    <text>Structural peptide 4 is a small peptide derived from pVP2 C-terminus. It is essential for the virus viability.</text>
</comment>
<comment type="subunit">
    <molecule>Capsid protein VP2</molecule>
    <text evidence="1">Homotrimer. A central divalent metal stabilizes the VP2 trimer (By similarity). Interacts with host ITGA4/ITGB1.</text>
</comment>
<comment type="subunit">
    <molecule>Capsid protein VP3</molecule>
    <text evidence="1">Homodimer. Interacts (via C-terminus) with VP1 in the cytoplasm. Interacts with VP2 (By similarity).</text>
</comment>
<comment type="subcellular location">
    <molecule>Capsid protein VP2</molecule>
    <subcellularLocation>
        <location evidence="6">Virion</location>
    </subcellularLocation>
    <subcellularLocation>
        <location evidence="6">Host cytoplasm</location>
    </subcellularLocation>
</comment>
<comment type="subcellular location">
    <molecule>Capsid protein VP3</molecule>
    <subcellularLocation>
        <location evidence="6">Virion</location>
    </subcellularLocation>
    <subcellularLocation>
        <location evidence="6">Host cytoplasm</location>
    </subcellularLocation>
</comment>
<comment type="subcellular location">
    <molecule>Structural peptide 1</molecule>
    <subcellularLocation>
        <location evidence="6">Virion</location>
    </subcellularLocation>
    <subcellularLocation>
        <location evidence="6">Host cytoplasm</location>
    </subcellularLocation>
</comment>
<comment type="subcellular location">
    <molecule>Structural peptide 2</molecule>
    <subcellularLocation>
        <location evidence="6">Virion</location>
    </subcellularLocation>
    <subcellularLocation>
        <location evidence="6">Host cytoplasm</location>
    </subcellularLocation>
</comment>
<comment type="subcellular location">
    <molecule>Structural peptide 3</molecule>
    <subcellularLocation>
        <location evidence="6">Virion</location>
    </subcellularLocation>
    <subcellularLocation>
        <location evidence="6">Host cytoplasm</location>
    </subcellularLocation>
</comment>
<comment type="subcellular location">
    <molecule>Structural peptide 4</molecule>
    <subcellularLocation>
        <location evidence="6">Virion</location>
    </subcellularLocation>
    <subcellularLocation>
        <location evidence="6">Host cytoplasm</location>
    </subcellularLocation>
</comment>
<comment type="PTM">
    <text evidence="1">Specific enzymatic cleavages yield mature proteins. The capsid assembly seems to be regulated by polyprotein processing. The protease VP4 cleaves itself off the polyprotein, thus releasing pre-VP2 and VP3 within the infected cell. During capsid assembly, the C-terminus of pre-VP2 is further processed by VP4, giving rise to VP2, the external capsid protein and three small peptides that all stay closely associated with the capsid (By similarity).</text>
</comment>
<organismHost>
    <name type="scientific">Gallus gallus</name>
    <name type="common">Chicken</name>
    <dbReference type="NCBI Taxonomy" id="9031"/>
</organismHost>
<organismHost>
    <name type="scientific">Meleagris gallopavo</name>
    <name type="common">Wild turkey</name>
    <dbReference type="NCBI Taxonomy" id="9103"/>
</organismHost>
<sequence length="1012" mass="109681">MTNLQDQTQQIVPFIRSLLMPTTGPASIPDDTLEKHTLRSETSTYNLTVGDTGSGLIVFFPGFPGSIVGAHYTLQSNGNYKFDQMLLTAQNLPASYNYCRLVSRSLTVRSSTLPGGVYALNGTINAVTFQGSLSELTDVSYNGLMSATANINDKIGNVLVGEGVTVLSLPTSYDLGYVRLGDPIPAIGLDPKMVATCDSSDRPRVYTITAADDYQFSSQYQPGGVTITLFSANIDAITSLSVGGELVFQTSVHGLVLGATIYLIGFDGTTVITRAVAANNGLTTGTDNLMPFNLVISTNEITQPITSIKLEIVTSKSGGQAGDQMSWSAKGSLAVTIHGGNYPGALRPVTLVAYERVATGSVVTVAGVSNFELIPNPELAKNLVTEYGRFDPGAMNYTKLILSERDRLGIKTVWPTREYTDFREYFMEVADLNSPLKIAGAFGFKDIIRAIRRIAVPVVSTLFPPAAPLAHAIGEGVDYLLGDEAQAASGTARAASGKARAASGRIRQLTLAADKGYEVVANLFQVPQNPVVDGILASPGVLRGAHNLDCVLREGATLFPVVITTVEDAMTPKALNSKMFAVIEGVREDLQPPSQRGSFIRTLSGHRVYGYAPDGVLPLETGRDYTVVPIDDVWDDSIMLSKDPIPPIVGNSGNLAIAYMDVFRPKVPIHVAMTGALNACGEIEKVSFRSTKLATAHRLGLKLAGPGAFDVNTGPNWATFIKRFPHNPRDWDRLPYLNLPYLPPNAGRQYHLAMAASEFKETPELESAVRAMEAAANVDPLFQSALSVFMWLEENGIVTDMANFALSDPNAHRMRNFLANAPQAGSKSQRAKYGTAGYGVEARGPTPEEAQREKDTRISKKMETMGIYFATPEWVALNGHRGPSPGQLKYWQNTREIPDPNEDYLDYVHAEKSRLASEEQILRAATSIYGAPGQAEPPQAFIDEVAKVYEINHGRGPNQEQMKDLLLTAMEMKHRNPRRALPKPKPKPNAPTQRPPGRLGRWIRTVSDEDLE</sequence>
<proteinExistence type="evidence at protein level"/>
<feature type="chain" id="PRO_0000392588" description="Structural polyprotein">
    <location>
        <begin position="1"/>
        <end position="1012"/>
    </location>
</feature>
<feature type="chain" id="PRO_0000392589" description="Precursor of VP2">
    <location>
        <begin position="1"/>
        <end position="512"/>
    </location>
</feature>
<feature type="chain" id="PRO_0000036765" description="Capsid protein VP2">
    <location>
        <begin position="1"/>
        <end position="441"/>
    </location>
</feature>
<feature type="peptide" id="PRO_0000227831" description="Structural peptide 1" evidence="5">
    <location>
        <begin position="442"/>
        <end position="487"/>
    </location>
</feature>
<feature type="peptide" id="PRO_0000227832" description="Structural peptide 2">
    <location>
        <begin position="488"/>
        <end position="494"/>
    </location>
</feature>
<feature type="peptide" id="PRO_0000227833" description="Structural peptide 3">
    <location>
        <begin position="495"/>
        <end position="501"/>
    </location>
</feature>
<feature type="peptide" id="PRO_0000227834" description="Structural peptide 4" evidence="4">
    <location>
        <begin position="502"/>
        <end position="512"/>
    </location>
</feature>
<feature type="chain" id="PRO_0000036766" description="Protease VP4">
    <location>
        <begin position="513"/>
        <end position="755"/>
    </location>
</feature>
<feature type="chain" id="PRO_0000036767" description="Capsid protein VP3">
    <location>
        <begin position="756"/>
        <end position="1012"/>
    </location>
</feature>
<feature type="domain" description="Peptidase S50" evidence="2">
    <location>
        <begin position="513"/>
        <end position="755"/>
    </location>
</feature>
<feature type="region of interest" description="Disordered" evidence="3">
    <location>
        <begin position="969"/>
        <end position="1012"/>
    </location>
</feature>
<feature type="region of interest" description="Interaction with VP1 protein" evidence="1">
    <location>
        <begin position="1003"/>
        <end position="1012"/>
    </location>
</feature>
<feature type="compositionally biased region" description="Basic residues" evidence="3">
    <location>
        <begin position="975"/>
        <end position="986"/>
    </location>
</feature>
<feature type="active site" description="Nucleophile" evidence="2 4">
    <location>
        <position position="652"/>
    </location>
</feature>
<feature type="active site" evidence="2 4">
    <location>
        <position position="692"/>
    </location>
</feature>
<feature type="binding site" evidence="1">
    <location>
        <position position="30"/>
    </location>
    <ligand>
        <name>a divalent metal cation</name>
        <dbReference type="ChEBI" id="CHEBI:60240"/>
        <note>ligand shared between trimeric partners</note>
    </ligand>
</feature>
<feature type="site" description="Cleavage; by protease VP4">
    <location>
        <begin position="441"/>
        <end position="442"/>
    </location>
</feature>
<feature type="site" description="Cleavage; by protease VP4">
    <location>
        <begin position="487"/>
        <end position="488"/>
    </location>
</feature>
<feature type="site" description="Cleavage; by protease VP4">
    <location>
        <begin position="494"/>
        <end position="495"/>
    </location>
</feature>
<feature type="site" description="Cleavage; by protease VP4">
    <location>
        <begin position="501"/>
        <end position="502"/>
    </location>
</feature>
<feature type="site" description="Cleavage; by protease VP4">
    <location>
        <begin position="512"/>
        <end position="513"/>
    </location>
</feature>
<feature type="site" description="Cleavage; by protease VP4">
    <location>
        <begin position="755"/>
        <end position="756"/>
    </location>
</feature>
<feature type="mutagenesis site" description="Lethal for the virus." evidence="5">
    <original>A</original>
    <variation>E</variation>
    <variation>Q</variation>
    <variation>R</variation>
    <location>
        <position position="441"/>
    </location>
</feature>
<feature type="mutagenesis site" description="Lethal for the virus." evidence="5">
    <original>F</original>
    <variation>D</variation>
    <variation>G</variation>
    <variation>N</variation>
    <location>
        <position position="442"/>
    </location>
</feature>
<feature type="mutagenesis site" description="No effect on virus growth." evidence="4 5">
    <original>AA</original>
    <variation>EF</variation>
    <location>
        <begin position="487"/>
        <end position="488"/>
    </location>
</feature>
<feature type="mutagenesis site" description="No effect on polyprotein processing." evidence="4 5">
    <original>AA</original>
    <variation>QL</variation>
    <location>
        <begin position="487"/>
        <end position="488"/>
    </location>
</feature>
<feature type="mutagenesis site" description="80% reduction of virus growth, small-plaque phenotype." evidence="4 5">
    <original>AA</original>
    <variation>EF</variation>
    <location>
        <begin position="494"/>
        <end position="495"/>
    </location>
</feature>
<feature type="mutagenesis site" description="No effect on polyprotein processing." evidence="4 5">
    <original>AA</original>
    <variation>QL</variation>
    <location>
        <begin position="494"/>
        <end position="495"/>
    </location>
</feature>
<feature type="mutagenesis site" description="No effect on virus growth." evidence="4 5">
    <original>AA</original>
    <variation>EF</variation>
    <location>
        <begin position="501"/>
        <end position="502"/>
    </location>
</feature>
<feature type="mutagenesis site" description="No effect on polyprotein processing." evidence="4 5">
    <original>AA</original>
    <variation>QL</variation>
    <location>
        <begin position="501"/>
        <end position="502"/>
    </location>
</feature>
<feature type="mutagenesis site" description="Gives rise to uncleaved pVP2-VP4 and two shorter forms of VP2. Lethal for the virus." evidence="4">
    <original>AA</original>
    <variation>EF</variation>
    <location>
        <begin position="512"/>
        <end position="513"/>
    </location>
</feature>
<feature type="mutagenesis site" description="Lethal for the virus." evidence="5">
    <original>A</original>
    <variation>D</variation>
    <variation>L</variation>
    <variation>N</variation>
    <variation>V</variation>
    <location>
        <position position="512"/>
    </location>
</feature>
<feature type="mutagenesis site" description="Smaller amounts of cleaved forms of pVP2. No effect virus growth." evidence="5">
    <original>A</original>
    <variation>G</variation>
    <location>
        <position position="512"/>
    </location>
</feature>
<feature type="mutagenesis site" description="Lethal for the virus." evidence="5">
    <original>A</original>
    <variation>I</variation>
    <variation>L</variation>
    <variation>N</variation>
    <variation>R</variation>
    <variation>S</variation>
    <variation>V</variation>
    <location>
        <position position="512"/>
    </location>
</feature>
<feature type="mutagenesis site" description="No effect on polyprotein processing and virus growth." evidence="5">
    <original>A</original>
    <variation>G</variation>
    <location>
        <position position="513"/>
    </location>
</feature>
<feature type="mutagenesis site" description="Complete loss of polyprotein processing." evidence="4">
    <original>S</original>
    <variation>A</variation>
    <variation>T</variation>
    <location>
        <position position="652"/>
    </location>
</feature>
<feature type="mutagenesis site" description="Partial loss of polyprotein processing." evidence="4">
    <original>S</original>
    <variation>C</variation>
    <location>
        <position position="652"/>
    </location>
</feature>
<feature type="mutagenesis site" description="Complete loss of polyprotein processing." evidence="4">
    <original>K</original>
    <variation>A</variation>
    <variation>R</variation>
    <variation>H</variation>
    <location>
        <position position="692"/>
    </location>
</feature>
<feature type="mutagenesis site" description="Gives rise to pVP2 and uncleaved VP3-VP4." evidence="4">
    <original>AA</original>
    <variation>EF</variation>
    <location>
        <begin position="755"/>
        <end position="756"/>
    </location>
</feature>
<feature type="helix" evidence="7">
    <location>
        <begin position="14"/>
        <end position="19"/>
    </location>
</feature>
<feature type="helix" evidence="7">
    <location>
        <begin position="21"/>
        <end position="23"/>
    </location>
</feature>
<feature type="strand" evidence="7">
    <location>
        <begin position="36"/>
        <end position="48"/>
    </location>
</feature>
<feature type="strand" evidence="7">
    <location>
        <begin position="55"/>
        <end position="59"/>
    </location>
</feature>
<feature type="strand" evidence="7">
    <location>
        <begin position="64"/>
        <end position="74"/>
    </location>
</feature>
<feature type="strand" evidence="7">
    <location>
        <begin position="80"/>
        <end position="87"/>
    </location>
</feature>
<feature type="helix" evidence="7">
    <location>
        <begin position="92"/>
        <end position="94"/>
    </location>
</feature>
<feature type="strand" evidence="7">
    <location>
        <begin position="96"/>
        <end position="110"/>
    </location>
</feature>
<feature type="strand" evidence="7">
    <location>
        <begin position="123"/>
        <end position="131"/>
    </location>
</feature>
<feature type="helix" evidence="7">
    <location>
        <begin position="133"/>
        <end position="135"/>
    </location>
</feature>
<feature type="turn" evidence="7">
    <location>
        <begin position="141"/>
        <end position="143"/>
    </location>
</feature>
<feature type="helix" evidence="7">
    <location>
        <begin position="144"/>
        <end position="146"/>
    </location>
</feature>
<feature type="helix" evidence="7">
    <location>
        <begin position="151"/>
        <end position="153"/>
    </location>
</feature>
<feature type="strand" evidence="7">
    <location>
        <begin position="154"/>
        <end position="159"/>
    </location>
</feature>
<feature type="turn" evidence="7">
    <location>
        <begin position="160"/>
        <end position="162"/>
    </location>
</feature>
<feature type="strand" evidence="7">
    <location>
        <begin position="164"/>
        <end position="167"/>
    </location>
</feature>
<feature type="strand" evidence="7">
    <location>
        <begin position="204"/>
        <end position="218"/>
    </location>
</feature>
<feature type="strand" evidence="7">
    <location>
        <begin position="225"/>
        <end position="238"/>
    </location>
</feature>
<feature type="strand" evidence="7">
    <location>
        <begin position="240"/>
        <end position="249"/>
    </location>
</feature>
<feature type="strand" evidence="7">
    <location>
        <begin position="251"/>
        <end position="265"/>
    </location>
</feature>
<feature type="strand" evidence="7">
    <location>
        <begin position="270"/>
        <end position="282"/>
    </location>
</feature>
<feature type="strand" evidence="7">
    <location>
        <begin position="284"/>
        <end position="286"/>
    </location>
</feature>
<feature type="strand" evidence="7">
    <location>
        <begin position="288"/>
        <end position="293"/>
    </location>
</feature>
<feature type="helix" evidence="7">
    <location>
        <begin position="298"/>
        <end position="300"/>
    </location>
</feature>
<feature type="strand" evidence="7">
    <location>
        <begin position="305"/>
        <end position="314"/>
    </location>
</feature>
<feature type="strand" evidence="7">
    <location>
        <begin position="316"/>
        <end position="318"/>
    </location>
</feature>
<feature type="strand" evidence="7">
    <location>
        <begin position="325"/>
        <end position="337"/>
    </location>
</feature>
<feature type="turn" evidence="7">
    <location>
        <begin position="338"/>
        <end position="341"/>
    </location>
</feature>
<feature type="strand" evidence="7">
    <location>
        <begin position="345"/>
        <end position="347"/>
    </location>
</feature>
<feature type="strand" evidence="7">
    <location>
        <begin position="349"/>
        <end position="356"/>
    </location>
</feature>
<feature type="strand" evidence="7">
    <location>
        <begin position="362"/>
        <end position="375"/>
    </location>
</feature>
<feature type="helix" evidence="7">
    <location>
        <begin position="379"/>
        <end position="381"/>
    </location>
</feature>
<feature type="helix" evidence="7">
    <location>
        <begin position="394"/>
        <end position="403"/>
    </location>
</feature>
<feature type="turn" evidence="7">
    <location>
        <begin position="404"/>
        <end position="409"/>
    </location>
</feature>
<feature type="strand" evidence="7">
    <location>
        <begin position="412"/>
        <end position="415"/>
    </location>
</feature>
<feature type="helix" evidence="7">
    <location>
        <begin position="416"/>
        <end position="422"/>
    </location>
</feature>
<feature type="turn" evidence="7">
    <location>
        <begin position="423"/>
        <end position="427"/>
    </location>
</feature>
<keyword id="KW-0002">3D-structure</keyword>
<keyword id="KW-0167">Capsid protein</keyword>
<keyword id="KW-0903">Direct protein sequencing</keyword>
<keyword id="KW-1035">Host cytoplasm</keyword>
<keyword id="KW-0378">Hydrolase</keyword>
<keyword id="KW-0479">Metal-binding</keyword>
<keyword id="KW-0645">Protease</keyword>
<keyword id="KW-0720">Serine protease</keyword>
<keyword id="KW-1146">T=13 icosahedral capsid protein</keyword>
<keyword id="KW-0946">Virion</keyword>
<protein>
    <recommendedName>
        <fullName>Structural polyprotein</fullName>
        <shortName>PP</shortName>
    </recommendedName>
    <component>
        <recommendedName>
            <fullName>Precursor of VP2</fullName>
            <shortName>Pre-VP2</shortName>
        </recommendedName>
    </component>
    <component>
        <recommendedName>
            <fullName>Capsid protein VP2</fullName>
        </recommendedName>
    </component>
    <component>
        <recommendedName>
            <fullName>Structural peptide 1</fullName>
            <shortName>p1</shortName>
        </recommendedName>
        <alternativeName>
            <fullName>pep46</fullName>
        </alternativeName>
    </component>
    <component>
        <recommendedName>
            <fullName>Structural peptide 2</fullName>
            <shortName>p2</shortName>
        </recommendedName>
        <alternativeName>
            <fullName>pep7a</fullName>
        </alternativeName>
    </component>
    <component>
        <recommendedName>
            <fullName>Structural peptide 3</fullName>
            <shortName>p3</shortName>
        </recommendedName>
        <alternativeName>
            <fullName>pep7b</fullName>
        </alternativeName>
    </component>
    <component>
        <recommendedName>
            <fullName>Structural peptide 4</fullName>
            <shortName>p4</shortName>
        </recommendedName>
        <alternativeName>
            <fullName>pep11</fullName>
        </alternativeName>
    </component>
    <component>
        <recommendedName>
            <fullName>Protease VP4</fullName>
            <ecNumber>3.4.21.-</ecNumber>
        </recommendedName>
        <alternativeName>
            <fullName>Non-structural protein VP4</fullName>
            <shortName>NS</shortName>
        </alternativeName>
    </component>
    <component>
        <recommendedName>
            <fullName>Capsid protein VP3</fullName>
        </recommendedName>
    </component>
</protein>
<dbReference type="EC" id="3.4.21.-"/>
<dbReference type="EMBL" id="X16107">
    <property type="protein sequence ID" value="CAA34234.1"/>
    <property type="molecule type" value="Genomic_RNA"/>
</dbReference>
<dbReference type="EMBL" id="D00867">
    <property type="protein sequence ID" value="BAA00740.1"/>
    <property type="molecule type" value="Genomic_RNA"/>
</dbReference>
<dbReference type="PIR" id="A35353">
    <property type="entry name" value="GNXSCU"/>
</dbReference>
<dbReference type="PDB" id="1WCD">
    <property type="method" value="X-ray"/>
    <property type="resolution" value="3.00 A"/>
    <property type="chains" value="J=1-441"/>
</dbReference>
<dbReference type="PDB" id="1WCE">
    <property type="method" value="X-ray"/>
    <property type="resolution" value="7.00 A"/>
    <property type="chains" value="A/B/C/D/E/F/G/H/I/J/K/L/M=1-441"/>
</dbReference>
<dbReference type="PDBsum" id="1WCD"/>
<dbReference type="PDBsum" id="1WCE"/>
<dbReference type="BMRB" id="P15480"/>
<dbReference type="SMR" id="P15480"/>
<dbReference type="MEROPS" id="S50.002"/>
<dbReference type="EvolutionaryTrace" id="P15480"/>
<dbReference type="GO" id="GO:0030430">
    <property type="term" value="C:host cell cytoplasm"/>
    <property type="evidence" value="ECO:0007669"/>
    <property type="project" value="UniProtKB-SubCell"/>
</dbReference>
<dbReference type="GO" id="GO:0039621">
    <property type="term" value="C:T=13 icosahedral viral capsid"/>
    <property type="evidence" value="ECO:0007669"/>
    <property type="project" value="UniProtKB-KW"/>
</dbReference>
<dbReference type="GO" id="GO:0046872">
    <property type="term" value="F:metal ion binding"/>
    <property type="evidence" value="ECO:0007669"/>
    <property type="project" value="UniProtKB-KW"/>
</dbReference>
<dbReference type="GO" id="GO:0008236">
    <property type="term" value="F:serine-type peptidase activity"/>
    <property type="evidence" value="ECO:0007669"/>
    <property type="project" value="UniProtKB-KW"/>
</dbReference>
<dbReference type="GO" id="GO:0005198">
    <property type="term" value="F:structural molecule activity"/>
    <property type="evidence" value="ECO:0007669"/>
    <property type="project" value="InterPro"/>
</dbReference>
<dbReference type="GO" id="GO:0006508">
    <property type="term" value="P:proteolysis"/>
    <property type="evidence" value="ECO:0007669"/>
    <property type="project" value="UniProtKB-KW"/>
</dbReference>
<dbReference type="FunFam" id="2.60.120.660:FF:000001">
    <property type="entry name" value="Structural polyprotein"/>
    <property type="match status" value="1"/>
</dbReference>
<dbReference type="Gene3D" id="2.60.120.20">
    <property type="match status" value="1"/>
</dbReference>
<dbReference type="Gene3D" id="6.10.250.1030">
    <property type="match status" value="1"/>
</dbReference>
<dbReference type="Gene3D" id="1.10.8.880">
    <property type="entry name" value="Birnavirus VP3 protein, domain 2"/>
    <property type="match status" value="1"/>
</dbReference>
<dbReference type="Gene3D" id="1.10.150.620">
    <property type="entry name" value="Capsid protein VP3, domain 1"/>
    <property type="match status" value="1"/>
</dbReference>
<dbReference type="Gene3D" id="2.60.120.660">
    <property type="entry name" value="icosahedral virus"/>
    <property type="match status" value="1"/>
</dbReference>
<dbReference type="InterPro" id="IPR002662">
    <property type="entry name" value="Birna_VP2"/>
</dbReference>
<dbReference type="InterPro" id="IPR002663">
    <property type="entry name" value="Birna_VP3"/>
</dbReference>
<dbReference type="InterPro" id="IPR043048">
    <property type="entry name" value="Birna_VP3_dom1"/>
</dbReference>
<dbReference type="InterPro" id="IPR043049">
    <property type="entry name" value="Birna_VP3_dom2"/>
</dbReference>
<dbReference type="InterPro" id="IPR025775">
    <property type="entry name" value="Birna_VP4_Prtase_dom"/>
</dbReference>
<dbReference type="InterPro" id="IPR029053">
    <property type="entry name" value="Viral_coat"/>
</dbReference>
<dbReference type="Pfam" id="PF01766">
    <property type="entry name" value="Birna_VP2"/>
    <property type="match status" value="1"/>
</dbReference>
<dbReference type="Pfam" id="PF01767">
    <property type="entry name" value="Birna_VP3"/>
    <property type="match status" value="1"/>
</dbReference>
<dbReference type="Pfam" id="PF01768">
    <property type="entry name" value="Birna_VP4"/>
    <property type="match status" value="1"/>
</dbReference>
<dbReference type="SUPFAM" id="SSF88633">
    <property type="entry name" value="Positive stranded ssRNA viruses"/>
    <property type="match status" value="1"/>
</dbReference>
<dbReference type="PROSITE" id="PS51548">
    <property type="entry name" value="BIRNAVIRUS_VP4_PRO"/>
    <property type="match status" value="1"/>
</dbReference>
<name>POLS_IBDVC</name>